<protein>
    <recommendedName>
        <fullName evidence="1">Probable protein kinase UbiB</fullName>
        <ecNumber evidence="1">2.7.-.-</ecNumber>
    </recommendedName>
    <alternativeName>
        <fullName evidence="1">Ubiquinone biosynthesis protein UbiB</fullName>
    </alternativeName>
</protein>
<proteinExistence type="inferred from homology"/>
<dbReference type="EC" id="2.7.-.-" evidence="1"/>
<dbReference type="EMBL" id="CP000647">
    <property type="protein sequence ID" value="ABR79699.1"/>
    <property type="molecule type" value="Genomic_DNA"/>
</dbReference>
<dbReference type="RefSeq" id="WP_002883424.1">
    <property type="nucleotide sequence ID" value="NC_009648.1"/>
</dbReference>
<dbReference type="SMR" id="A6TGL5"/>
<dbReference type="STRING" id="272620.KPN_04331"/>
<dbReference type="PaxDb" id="272620-KPN_04331"/>
<dbReference type="EnsemblBacteria" id="ABR79699">
    <property type="protein sequence ID" value="ABR79699"/>
    <property type="gene ID" value="KPN_04331"/>
</dbReference>
<dbReference type="KEGG" id="kpn:KPN_04331"/>
<dbReference type="HOGENOM" id="CLU_006533_0_0_6"/>
<dbReference type="UniPathway" id="UPA00232"/>
<dbReference type="Proteomes" id="UP000000265">
    <property type="component" value="Chromosome"/>
</dbReference>
<dbReference type="GO" id="GO:0005886">
    <property type="term" value="C:plasma membrane"/>
    <property type="evidence" value="ECO:0007669"/>
    <property type="project" value="UniProtKB-SubCell"/>
</dbReference>
<dbReference type="GO" id="GO:0005524">
    <property type="term" value="F:ATP binding"/>
    <property type="evidence" value="ECO:0007669"/>
    <property type="project" value="UniProtKB-KW"/>
</dbReference>
<dbReference type="GO" id="GO:0004672">
    <property type="term" value="F:protein kinase activity"/>
    <property type="evidence" value="ECO:0007669"/>
    <property type="project" value="UniProtKB-UniRule"/>
</dbReference>
<dbReference type="GO" id="GO:0010795">
    <property type="term" value="P:regulation of ubiquinone biosynthetic process"/>
    <property type="evidence" value="ECO:0007669"/>
    <property type="project" value="UniProtKB-UniRule"/>
</dbReference>
<dbReference type="GO" id="GO:0006744">
    <property type="term" value="P:ubiquinone biosynthetic process"/>
    <property type="evidence" value="ECO:0007669"/>
    <property type="project" value="UniProtKB-UniPathway"/>
</dbReference>
<dbReference type="CDD" id="cd13972">
    <property type="entry name" value="UbiB"/>
    <property type="match status" value="1"/>
</dbReference>
<dbReference type="HAMAP" id="MF_00414">
    <property type="entry name" value="UbiB"/>
    <property type="match status" value="1"/>
</dbReference>
<dbReference type="InterPro" id="IPR004147">
    <property type="entry name" value="ABC1_dom"/>
</dbReference>
<dbReference type="InterPro" id="IPR011009">
    <property type="entry name" value="Kinase-like_dom_sf"/>
</dbReference>
<dbReference type="InterPro" id="IPR010232">
    <property type="entry name" value="UbiB"/>
</dbReference>
<dbReference type="InterPro" id="IPR045308">
    <property type="entry name" value="UbiB_bact"/>
</dbReference>
<dbReference type="InterPro" id="IPR050154">
    <property type="entry name" value="UbiB_kinase"/>
</dbReference>
<dbReference type="NCBIfam" id="NF003404">
    <property type="entry name" value="PRK04750.1"/>
    <property type="match status" value="1"/>
</dbReference>
<dbReference type="NCBIfam" id="TIGR01982">
    <property type="entry name" value="UbiB"/>
    <property type="match status" value="1"/>
</dbReference>
<dbReference type="PANTHER" id="PTHR10566">
    <property type="entry name" value="CHAPERONE-ACTIVITY OF BC1 COMPLEX CABC1 -RELATED"/>
    <property type="match status" value="1"/>
</dbReference>
<dbReference type="PANTHER" id="PTHR10566:SF113">
    <property type="entry name" value="PROTEIN ACTIVITY OF BC1 COMPLEX KINASE 7, CHLOROPLASTIC"/>
    <property type="match status" value="1"/>
</dbReference>
<dbReference type="Pfam" id="PF03109">
    <property type="entry name" value="ABC1"/>
    <property type="match status" value="1"/>
</dbReference>
<dbReference type="SUPFAM" id="SSF56112">
    <property type="entry name" value="Protein kinase-like (PK-like)"/>
    <property type="match status" value="1"/>
</dbReference>
<keyword id="KW-0067">ATP-binding</keyword>
<keyword id="KW-0997">Cell inner membrane</keyword>
<keyword id="KW-1003">Cell membrane</keyword>
<keyword id="KW-0418">Kinase</keyword>
<keyword id="KW-0472">Membrane</keyword>
<keyword id="KW-0547">Nucleotide-binding</keyword>
<keyword id="KW-0808">Transferase</keyword>
<keyword id="KW-0812">Transmembrane</keyword>
<keyword id="KW-1133">Transmembrane helix</keyword>
<keyword id="KW-0831">Ubiquinone biosynthesis</keyword>
<feature type="chain" id="PRO_1000050045" description="Probable protein kinase UbiB">
    <location>
        <begin position="1"/>
        <end position="546"/>
    </location>
</feature>
<feature type="transmembrane region" description="Helical" evidence="1">
    <location>
        <begin position="501"/>
        <end position="521"/>
    </location>
</feature>
<feature type="transmembrane region" description="Helical" evidence="1">
    <location>
        <begin position="522"/>
        <end position="542"/>
    </location>
</feature>
<feature type="domain" description="Protein kinase" evidence="1">
    <location>
        <begin position="124"/>
        <end position="502"/>
    </location>
</feature>
<feature type="active site" description="Proton acceptor" evidence="1">
    <location>
        <position position="288"/>
    </location>
</feature>
<feature type="binding site" evidence="1">
    <location>
        <begin position="130"/>
        <end position="138"/>
    </location>
    <ligand>
        <name>ATP</name>
        <dbReference type="ChEBI" id="CHEBI:30616"/>
    </ligand>
</feature>
<feature type="binding site" evidence="1">
    <location>
        <position position="153"/>
    </location>
    <ligand>
        <name>ATP</name>
        <dbReference type="ChEBI" id="CHEBI:30616"/>
    </ligand>
</feature>
<reference key="1">
    <citation type="submission" date="2006-09" db="EMBL/GenBank/DDBJ databases">
        <authorList>
            <consortium name="The Klebsiella pneumonia Genome Sequencing Project"/>
            <person name="McClelland M."/>
            <person name="Sanderson E.K."/>
            <person name="Spieth J."/>
            <person name="Clifton W.S."/>
            <person name="Latreille P."/>
            <person name="Sabo A."/>
            <person name="Pepin K."/>
            <person name="Bhonagiri V."/>
            <person name="Porwollik S."/>
            <person name="Ali J."/>
            <person name="Wilson R.K."/>
        </authorList>
    </citation>
    <scope>NUCLEOTIDE SEQUENCE [LARGE SCALE GENOMIC DNA]</scope>
    <source>
        <strain>ATCC 700721 / MGH 78578</strain>
    </source>
</reference>
<sequence>MTPGELRRLYFIIHTFLSYGLDELIPKMRITLPLRIWRRMLFWMPNRHQDQPLGARLRLALQELGPVWIKFGQMLSTRRDLFPPHIADQLALLQDRVAPFEGKLAQQQIEKAMGGLPVETWFDDFSVEPLASASIAQVHTARLKENGKEVVIKVIRPDILPIIKADMKLIYRLARWVPRLLPDGRRLRPQEVVREYEKTLLDELNLLRESANAIQLRRNFEDSPMLYVPEVYPDYCSESMMVMERIYGIPVSDVEALEAQGTNMQLLAERGVQVFFTQVFRDSFFHADMHPGNIFVSYEHPEDPQYIGIDCGIVGSLNKEDKRYLAENFIAFFNRDYRKVAELHVDSGWVPPDTNVEEFEFAIRTVCEPIFEKPLAEISFGHVLLNLFNTARRFNMEVQPQLVLLQKTLLYVEGVGRQLYPQLDLWKTAKPFLESWIKDQVGIPALVRAFKDKAPFWIERMPEIPELVYQSLQQSKQLQTSVDTIVRDMRVRHVRQGQSRYLFGIGAVLLLSGTLLFIHRPEWGMMPGWLMAGGVVTWLIGWRKTH</sequence>
<accession>A6TGL5</accession>
<gene>
    <name evidence="1" type="primary">ubiB</name>
    <name type="ordered locus">KPN78578_42750</name>
    <name type="ORF">KPN_04331</name>
</gene>
<evidence type="ECO:0000255" key="1">
    <source>
        <dbReference type="HAMAP-Rule" id="MF_00414"/>
    </source>
</evidence>
<comment type="function">
    <text evidence="1">Is probably a protein kinase regulator of UbiI activity which is involved in aerobic coenzyme Q (ubiquinone) biosynthesis.</text>
</comment>
<comment type="pathway">
    <text>Cofactor biosynthesis; ubiquinone biosynthesis [regulation].</text>
</comment>
<comment type="subcellular location">
    <subcellularLocation>
        <location evidence="1">Cell inner membrane</location>
        <topology evidence="1">Multi-pass membrane protein</topology>
    </subcellularLocation>
</comment>
<comment type="similarity">
    <text evidence="1">Belongs to the ABC1 family. UbiB subfamily.</text>
</comment>
<name>UBIB_KLEP7</name>
<organism>
    <name type="scientific">Klebsiella pneumoniae subsp. pneumoniae (strain ATCC 700721 / MGH 78578)</name>
    <dbReference type="NCBI Taxonomy" id="272620"/>
    <lineage>
        <taxon>Bacteria</taxon>
        <taxon>Pseudomonadati</taxon>
        <taxon>Pseudomonadota</taxon>
        <taxon>Gammaproteobacteria</taxon>
        <taxon>Enterobacterales</taxon>
        <taxon>Enterobacteriaceae</taxon>
        <taxon>Klebsiella/Raoultella group</taxon>
        <taxon>Klebsiella</taxon>
        <taxon>Klebsiella pneumoniae complex</taxon>
    </lineage>
</organism>